<reference key="1">
    <citation type="journal article" date="2004" name="Proc. Natl. Acad. Sci. U.S.A.">
        <title>Complete genomes of two clinical Staphylococcus aureus strains: evidence for the rapid evolution of virulence and drug resistance.</title>
        <authorList>
            <person name="Holden M.T.G."/>
            <person name="Feil E.J."/>
            <person name="Lindsay J.A."/>
            <person name="Peacock S.J."/>
            <person name="Day N.P.J."/>
            <person name="Enright M.C."/>
            <person name="Foster T.J."/>
            <person name="Moore C.E."/>
            <person name="Hurst L."/>
            <person name="Atkin R."/>
            <person name="Barron A."/>
            <person name="Bason N."/>
            <person name="Bentley S.D."/>
            <person name="Chillingworth C."/>
            <person name="Chillingworth T."/>
            <person name="Churcher C."/>
            <person name="Clark L."/>
            <person name="Corton C."/>
            <person name="Cronin A."/>
            <person name="Doggett J."/>
            <person name="Dowd L."/>
            <person name="Feltwell T."/>
            <person name="Hance Z."/>
            <person name="Harris B."/>
            <person name="Hauser H."/>
            <person name="Holroyd S."/>
            <person name="Jagels K."/>
            <person name="James K.D."/>
            <person name="Lennard N."/>
            <person name="Line A."/>
            <person name="Mayes R."/>
            <person name="Moule S."/>
            <person name="Mungall K."/>
            <person name="Ormond D."/>
            <person name="Quail M.A."/>
            <person name="Rabbinowitsch E."/>
            <person name="Rutherford K.M."/>
            <person name="Sanders M."/>
            <person name="Sharp S."/>
            <person name="Simmonds M."/>
            <person name="Stevens K."/>
            <person name="Whitehead S."/>
            <person name="Barrell B.G."/>
            <person name="Spratt B.G."/>
            <person name="Parkhill J."/>
        </authorList>
    </citation>
    <scope>NUCLEOTIDE SEQUENCE [LARGE SCALE GENOMIC DNA]</scope>
    <source>
        <strain>MSSA476</strain>
    </source>
</reference>
<dbReference type="EC" id="2.4.1.187" evidence="1"/>
<dbReference type="EMBL" id="BX571857">
    <property type="protein sequence ID" value="CAG42377.1"/>
    <property type="molecule type" value="Genomic_DNA"/>
</dbReference>
<dbReference type="RefSeq" id="WP_000215388.1">
    <property type="nucleotide sequence ID" value="NC_002953.3"/>
</dbReference>
<dbReference type="SMR" id="Q6GBJ4"/>
<dbReference type="CAZy" id="GT26">
    <property type="family name" value="Glycosyltransferase Family 26"/>
</dbReference>
<dbReference type="KEGG" id="sas:SAS0602"/>
<dbReference type="HOGENOM" id="CLU_063203_3_1_9"/>
<dbReference type="UniPathway" id="UPA00790"/>
<dbReference type="GO" id="GO:0047244">
    <property type="term" value="F:N-acetylglucosaminyldiphosphoundecaprenol N-acetyl-beta-D-mannosaminyltransferase activity"/>
    <property type="evidence" value="ECO:0007669"/>
    <property type="project" value="UniProtKB-UniRule"/>
</dbReference>
<dbReference type="GO" id="GO:0071555">
    <property type="term" value="P:cell wall organization"/>
    <property type="evidence" value="ECO:0007669"/>
    <property type="project" value="UniProtKB-KW"/>
</dbReference>
<dbReference type="GO" id="GO:0019350">
    <property type="term" value="P:teichoic acid biosynthetic process"/>
    <property type="evidence" value="ECO:0007669"/>
    <property type="project" value="UniProtKB-UniRule"/>
</dbReference>
<dbReference type="CDD" id="cd06533">
    <property type="entry name" value="Glyco_transf_WecG_TagA"/>
    <property type="match status" value="1"/>
</dbReference>
<dbReference type="HAMAP" id="MF_02070">
    <property type="entry name" value="TagA_TarA"/>
    <property type="match status" value="1"/>
</dbReference>
<dbReference type="InterPro" id="IPR053391">
    <property type="entry name" value="TAB_Glycosyltransferase"/>
</dbReference>
<dbReference type="InterPro" id="IPR034714">
    <property type="entry name" value="TagA_TarA"/>
</dbReference>
<dbReference type="InterPro" id="IPR004629">
    <property type="entry name" value="WecG_TagA_CpsF"/>
</dbReference>
<dbReference type="NCBIfam" id="NF041710">
    <property type="entry name" value="UDPacetylman_taseTarA"/>
    <property type="match status" value="1"/>
</dbReference>
<dbReference type="NCBIfam" id="TIGR00696">
    <property type="entry name" value="wecG_tagA_cpsF"/>
    <property type="match status" value="1"/>
</dbReference>
<dbReference type="PANTHER" id="PTHR34136">
    <property type="match status" value="1"/>
</dbReference>
<dbReference type="PANTHER" id="PTHR34136:SF1">
    <property type="entry name" value="UDP-N-ACETYL-D-MANNOSAMINURONIC ACID TRANSFERASE"/>
    <property type="match status" value="1"/>
</dbReference>
<dbReference type="Pfam" id="PF03808">
    <property type="entry name" value="Glyco_tran_WecG"/>
    <property type="match status" value="1"/>
</dbReference>
<gene>
    <name type="primary">tarA</name>
    <name type="ordered locus">SAS0602</name>
</gene>
<evidence type="ECO:0000255" key="1">
    <source>
        <dbReference type="HAMAP-Rule" id="MF_02070"/>
    </source>
</evidence>
<evidence type="ECO:0000305" key="2"/>
<sequence>MTVEERSNTAKVDILGVDFDNTTMLQMVENIKTFFANQSTNNLFIVTANPEIVNYATTHQAYLELINQASYIVADGTGVVKASHRLKQPLAHRIPGIELMDECLKIAHVNHQKVFLLGATNEVVEAAQYALQQRYPNISFAHHHGYIDLEDETVVKRIKLFKPDYIFVGMGFPKQEEWIMTHENQFESTVMMGVGGSLEVFAGAKKRAPYIFRKLNIEWIYRALIDWKRIGRLKSIPIFMYKIAKAKRKIKKAK</sequence>
<accession>Q6GBJ4</accession>
<proteinExistence type="inferred from homology"/>
<comment type="function">
    <text evidence="1">Catalyzes the conversion of GlcNAc-PP-undecaprenol into ManNAc-GlcNAc-PP-undecaprenol, the first committed lipid intermediate in the de novo synthesis of teichoic acid.</text>
</comment>
<comment type="catalytic activity">
    <reaction evidence="1">
        <text>UDP-N-acetyl-alpha-D-mannosamine + N-acetyl-alpha-D-glucosaminyl-di-trans,octa-cis-undecaprenyl diphosphate = N-acetyl-beta-D-mannosaminyl-(1-&gt;4)-N-acetyl-alpha-D-glucosaminyl di-trans,octa-cis-undecaprenyl diphosphate + UDP + H(+)</text>
        <dbReference type="Rhea" id="RHEA:16053"/>
        <dbReference type="ChEBI" id="CHEBI:15378"/>
        <dbReference type="ChEBI" id="CHEBI:58223"/>
        <dbReference type="ChEBI" id="CHEBI:62959"/>
        <dbReference type="ChEBI" id="CHEBI:68623"/>
        <dbReference type="ChEBI" id="CHEBI:132210"/>
        <dbReference type="EC" id="2.4.1.187"/>
    </reaction>
</comment>
<comment type="pathway">
    <text evidence="2">Cell wall biogenesis; poly(ribitol phosphate) teichoic acid biosynthesis.</text>
</comment>
<comment type="similarity">
    <text evidence="1">Belongs to the glycosyltransferase 26 family. TagA/TarA subfamily.</text>
</comment>
<feature type="chain" id="PRO_0000208445" description="N-acetylglucosaminyldiphosphoundecaprenol N-acetyl-beta-D-mannosaminyltransferase">
    <location>
        <begin position="1"/>
        <end position="254"/>
    </location>
</feature>
<keyword id="KW-0961">Cell wall biogenesis/degradation</keyword>
<keyword id="KW-0328">Glycosyltransferase</keyword>
<keyword id="KW-0777">Teichoic acid biosynthesis</keyword>
<keyword id="KW-0808">Transferase</keyword>
<organism>
    <name type="scientific">Staphylococcus aureus (strain MSSA476)</name>
    <dbReference type="NCBI Taxonomy" id="282459"/>
    <lineage>
        <taxon>Bacteria</taxon>
        <taxon>Bacillati</taxon>
        <taxon>Bacillota</taxon>
        <taxon>Bacilli</taxon>
        <taxon>Bacillales</taxon>
        <taxon>Staphylococcaceae</taxon>
        <taxon>Staphylococcus</taxon>
    </lineage>
</organism>
<protein>
    <recommendedName>
        <fullName evidence="1">N-acetylglucosaminyldiphosphoundecaprenol N-acetyl-beta-D-mannosaminyltransferase</fullName>
        <ecNumber evidence="1">2.4.1.187</ecNumber>
    </recommendedName>
    <alternativeName>
        <fullName evidence="1">N-acetylmannosaminyltransferase</fullName>
    </alternativeName>
    <alternativeName>
        <fullName evidence="1">UDP-N-acetylmannosamine transferase</fullName>
    </alternativeName>
    <alternativeName>
        <fullName evidence="1">UDP-N-acetylmannosamine:N-acetylglucosaminyl pyrophosphorylundecaprenol N-acetylmannosaminyltransferase</fullName>
    </alternativeName>
</protein>
<name>TARA_STAAS</name>